<gene>
    <name type="primary">PAP15</name>
    <name type="synonym">AT1</name>
    <name type="ordered locus">At3g07130</name>
    <name type="ORF">T1B9.21</name>
</gene>
<keyword id="KW-0325">Glycoprotein</keyword>
<keyword id="KW-0378">Hydrolase</keyword>
<keyword id="KW-0408">Iron</keyword>
<keyword id="KW-0479">Metal-binding</keyword>
<keyword id="KW-1185">Reference proteome</keyword>
<keyword id="KW-0964">Secreted</keyword>
<keyword id="KW-0732">Signal</keyword>
<keyword id="KW-0862">Zinc</keyword>
<organism>
    <name type="scientific">Arabidopsis thaliana</name>
    <name type="common">Mouse-ear cress</name>
    <dbReference type="NCBI Taxonomy" id="3702"/>
    <lineage>
        <taxon>Eukaryota</taxon>
        <taxon>Viridiplantae</taxon>
        <taxon>Streptophyta</taxon>
        <taxon>Embryophyta</taxon>
        <taxon>Tracheophyta</taxon>
        <taxon>Spermatophyta</taxon>
        <taxon>Magnoliopsida</taxon>
        <taxon>eudicotyledons</taxon>
        <taxon>Gunneridae</taxon>
        <taxon>Pentapetalae</taxon>
        <taxon>rosids</taxon>
        <taxon>malvids</taxon>
        <taxon>Brassicales</taxon>
        <taxon>Brassicaceae</taxon>
        <taxon>Camelineae</taxon>
        <taxon>Arabidopsis</taxon>
    </lineage>
</organism>
<sequence>MTFLLLLLFCFLSPAISSAHSIPSTLDGPFVPVTVPLDTSLRGQAIDLPDTDPRVRRRVIGFEPEQISLSLSSDHDSIWVSWITGEFQIGKKVKPLDPTSINSVVQFGTLRHSLSHEAKGHSLVYSQLYPFDGLLNYTSGIIHHVRITGLKPSTIYYYRCGDPSRRAMSKIHHFRTMPVSSPSSYPGRIAVVGDLGLTYNTTDTISHLIHNSPDLILLIGDVSYANLYLTNGTSSDCYSCSFPETPIHETYQPRWDYWGRFMENLTSKVPLMVIEGNHEIELQAENKTFEAYSSRFAFPFNESGSSSTLYYSFNAGGIHFVMLGAYIAYDKSAEQYEWLKKDLAKVDRSVTPWLVASWHPPWYSSYTAHYREAECMKEAMEELLYSYGTDIVFNGHVHAYERSNRVYNYELDPCGPVYIVIGDGGNREKMAIEHADDPGKCPEPLTTPDPVMGGFCAWNFTPSDKFCWDRQPDYSALRESSFGHGILEMKNETWALWTWYRNQDSSSEVGDQIYIVRQPDRCPLHHRLVNHC</sequence>
<evidence type="ECO:0000250" key="1"/>
<evidence type="ECO:0000255" key="2"/>
<evidence type="ECO:0000269" key="3">
    <source>
    </source>
</evidence>
<evidence type="ECO:0000269" key="4">
    <source>
    </source>
</evidence>
<evidence type="ECO:0000305" key="5"/>
<reference key="1">
    <citation type="journal article" date="2005" name="Plant Mol. Biol.">
        <title>Expression patterns of purple acid phosphatase genes in Arabidopsis organs and functional analysis of AtPAP23 predominantly transcribed in flower.</title>
        <authorList>
            <person name="Zhu H."/>
            <person name="Qian W."/>
            <person name="Lu X."/>
            <person name="Li D."/>
            <person name="Liu X."/>
            <person name="Liu K."/>
            <person name="Wang D."/>
        </authorList>
    </citation>
    <scope>NUCLEOTIDE SEQUENCE [MRNA]</scope>
    <scope>TISSUE SPECIFICITY</scope>
    <source>
        <strain>cv. Columbia</strain>
    </source>
</reference>
<reference key="2">
    <citation type="journal article" date="2000" name="Nature">
        <title>Sequence and analysis of chromosome 3 of the plant Arabidopsis thaliana.</title>
        <authorList>
            <person name="Salanoubat M."/>
            <person name="Lemcke K."/>
            <person name="Rieger M."/>
            <person name="Ansorge W."/>
            <person name="Unseld M."/>
            <person name="Fartmann B."/>
            <person name="Valle G."/>
            <person name="Bloecker H."/>
            <person name="Perez-Alonso M."/>
            <person name="Obermaier B."/>
            <person name="Delseny M."/>
            <person name="Boutry M."/>
            <person name="Grivell L.A."/>
            <person name="Mache R."/>
            <person name="Puigdomenech P."/>
            <person name="De Simone V."/>
            <person name="Choisne N."/>
            <person name="Artiguenave F."/>
            <person name="Robert C."/>
            <person name="Brottier P."/>
            <person name="Wincker P."/>
            <person name="Cattolico L."/>
            <person name="Weissenbach J."/>
            <person name="Saurin W."/>
            <person name="Quetier F."/>
            <person name="Schaefer M."/>
            <person name="Mueller-Auer S."/>
            <person name="Gabel C."/>
            <person name="Fuchs M."/>
            <person name="Benes V."/>
            <person name="Wurmbach E."/>
            <person name="Drzonek H."/>
            <person name="Erfle H."/>
            <person name="Jordan N."/>
            <person name="Bangert S."/>
            <person name="Wiedelmann R."/>
            <person name="Kranz H."/>
            <person name="Voss H."/>
            <person name="Holland R."/>
            <person name="Brandt P."/>
            <person name="Nyakatura G."/>
            <person name="Vezzi A."/>
            <person name="D'Angelo M."/>
            <person name="Pallavicini A."/>
            <person name="Toppo S."/>
            <person name="Simionati B."/>
            <person name="Conrad A."/>
            <person name="Hornischer K."/>
            <person name="Kauer G."/>
            <person name="Loehnert T.-H."/>
            <person name="Nordsiek G."/>
            <person name="Reichelt J."/>
            <person name="Scharfe M."/>
            <person name="Schoen O."/>
            <person name="Bargues M."/>
            <person name="Terol J."/>
            <person name="Climent J."/>
            <person name="Navarro P."/>
            <person name="Collado C."/>
            <person name="Perez-Perez A."/>
            <person name="Ottenwaelder B."/>
            <person name="Duchemin D."/>
            <person name="Cooke R."/>
            <person name="Laudie M."/>
            <person name="Berger-Llauro C."/>
            <person name="Purnelle B."/>
            <person name="Masuy D."/>
            <person name="de Haan M."/>
            <person name="Maarse A.C."/>
            <person name="Alcaraz J.-P."/>
            <person name="Cottet A."/>
            <person name="Casacuberta E."/>
            <person name="Monfort A."/>
            <person name="Argiriou A."/>
            <person name="Flores M."/>
            <person name="Liguori R."/>
            <person name="Vitale D."/>
            <person name="Mannhaupt G."/>
            <person name="Haase D."/>
            <person name="Schoof H."/>
            <person name="Rudd S."/>
            <person name="Zaccaria P."/>
            <person name="Mewes H.-W."/>
            <person name="Mayer K.F.X."/>
            <person name="Kaul S."/>
            <person name="Town C.D."/>
            <person name="Koo H.L."/>
            <person name="Tallon L.J."/>
            <person name="Jenkins J."/>
            <person name="Rooney T."/>
            <person name="Rizzo M."/>
            <person name="Walts A."/>
            <person name="Utterback T."/>
            <person name="Fujii C.Y."/>
            <person name="Shea T.P."/>
            <person name="Creasy T.H."/>
            <person name="Haas B."/>
            <person name="Maiti R."/>
            <person name="Wu D."/>
            <person name="Peterson J."/>
            <person name="Van Aken S."/>
            <person name="Pai G."/>
            <person name="Militscher J."/>
            <person name="Sellers P."/>
            <person name="Gill J.E."/>
            <person name="Feldblyum T.V."/>
            <person name="Preuss D."/>
            <person name="Lin X."/>
            <person name="Nierman W.C."/>
            <person name="Salzberg S.L."/>
            <person name="White O."/>
            <person name="Venter J.C."/>
            <person name="Fraser C.M."/>
            <person name="Kaneko T."/>
            <person name="Nakamura Y."/>
            <person name="Sato S."/>
            <person name="Kato T."/>
            <person name="Asamizu E."/>
            <person name="Sasamoto S."/>
            <person name="Kimura T."/>
            <person name="Idesawa K."/>
            <person name="Kawashima K."/>
            <person name="Kishida Y."/>
            <person name="Kiyokawa C."/>
            <person name="Kohara M."/>
            <person name="Matsumoto M."/>
            <person name="Matsuno A."/>
            <person name="Muraki A."/>
            <person name="Nakayama S."/>
            <person name="Nakazaki N."/>
            <person name="Shinpo S."/>
            <person name="Takeuchi C."/>
            <person name="Wada T."/>
            <person name="Watanabe A."/>
            <person name="Yamada M."/>
            <person name="Yasuda M."/>
            <person name="Tabata S."/>
        </authorList>
    </citation>
    <scope>NUCLEOTIDE SEQUENCE [LARGE SCALE GENOMIC DNA]</scope>
    <source>
        <strain>cv. Columbia</strain>
    </source>
</reference>
<reference key="3">
    <citation type="journal article" date="2017" name="Plant J.">
        <title>Araport11: a complete reannotation of the Arabidopsis thaliana reference genome.</title>
        <authorList>
            <person name="Cheng C.Y."/>
            <person name="Krishnakumar V."/>
            <person name="Chan A.P."/>
            <person name="Thibaud-Nissen F."/>
            <person name="Schobel S."/>
            <person name="Town C.D."/>
        </authorList>
    </citation>
    <scope>GENOME REANNOTATION</scope>
    <source>
        <strain>cv. Columbia</strain>
    </source>
</reference>
<reference key="4">
    <citation type="journal article" date="2002" name="J. Biol. Chem.">
        <title>Purple acid phosphatases of Arabidopsis thaliana. Comparative analysis and differential regulation by phosphate deprivation.</title>
        <authorList>
            <person name="Li D."/>
            <person name="Zhu H."/>
            <person name="Liu K."/>
            <person name="Liu X."/>
            <person name="Leggewie G."/>
            <person name="Udvardi M."/>
            <person name="Wang D."/>
        </authorList>
    </citation>
    <scope>GENE FAMILY</scope>
    <scope>NOMENCLATURE</scope>
</reference>
<reference key="5">
    <citation type="journal article" date="2008" name="Plant Physiol.">
        <title>An Arabidopsis purple acid phosphatase with phytase activity increases foliar ascorbate.</title>
        <authorList>
            <person name="Zhang W."/>
            <person name="Gruszewski H.A."/>
            <person name="Chevone B.I."/>
            <person name="Nessler C.L."/>
        </authorList>
    </citation>
    <scope>FUNCTION</scope>
    <scope>BIOPHYSICOCHEMICAL PROPERTIES</scope>
    <scope>TISSUE SPECIFICITY</scope>
</reference>
<name>PPA15_ARATH</name>
<protein>
    <recommendedName>
        <fullName>Purple acid phosphatase 15</fullName>
        <ecNumber>3.1.3.-</ecNumber>
        <ecNumber>3.1.3.2</ecNumber>
    </recommendedName>
    <alternativeName>
        <fullName>Phytase</fullName>
    </alternativeName>
</protein>
<proteinExistence type="evidence at protein level"/>
<feature type="signal peptide" evidence="2">
    <location>
        <begin position="1"/>
        <end position="19"/>
    </location>
</feature>
<feature type="chain" id="PRO_0000372819" description="Purple acid phosphatase 15">
    <location>
        <begin position="20"/>
        <end position="532"/>
    </location>
</feature>
<feature type="active site" description="Proton donor" evidence="1">
    <location>
        <position position="369"/>
    </location>
</feature>
<feature type="binding site" evidence="1">
    <location>
        <position position="194"/>
    </location>
    <ligand>
        <name>Fe cation</name>
        <dbReference type="ChEBI" id="CHEBI:24875"/>
    </ligand>
</feature>
<feature type="binding site" evidence="1">
    <location>
        <position position="221"/>
    </location>
    <ligand>
        <name>Fe cation</name>
        <dbReference type="ChEBI" id="CHEBI:24875"/>
    </ligand>
</feature>
<feature type="binding site" evidence="1">
    <location>
        <position position="221"/>
    </location>
    <ligand>
        <name>Zn(2+)</name>
        <dbReference type="ChEBI" id="CHEBI:29105"/>
    </ligand>
</feature>
<feature type="binding site" evidence="1">
    <location>
        <position position="224"/>
    </location>
    <ligand>
        <name>Fe cation</name>
        <dbReference type="ChEBI" id="CHEBI:24875"/>
    </ligand>
</feature>
<feature type="binding site" evidence="1">
    <location>
        <position position="277"/>
    </location>
    <ligand>
        <name>substrate</name>
    </ligand>
</feature>
<feature type="binding site" evidence="1">
    <location>
        <position position="277"/>
    </location>
    <ligand>
        <name>Zn(2+)</name>
        <dbReference type="ChEBI" id="CHEBI:29105"/>
    </ligand>
</feature>
<feature type="binding site" evidence="1">
    <location>
        <position position="359"/>
    </location>
    <ligand>
        <name>Zn(2+)</name>
        <dbReference type="ChEBI" id="CHEBI:29105"/>
    </ligand>
</feature>
<feature type="binding site" evidence="1">
    <location>
        <begin position="396"/>
        <end position="398"/>
    </location>
    <ligand>
        <name>substrate</name>
    </ligand>
</feature>
<feature type="binding site" evidence="1">
    <location>
        <position position="396"/>
    </location>
    <ligand>
        <name>Zn(2+)</name>
        <dbReference type="ChEBI" id="CHEBI:29105"/>
    </ligand>
</feature>
<feature type="binding site" evidence="1">
    <location>
        <position position="398"/>
    </location>
    <ligand>
        <name>Fe cation</name>
        <dbReference type="ChEBI" id="CHEBI:24875"/>
    </ligand>
</feature>
<feature type="glycosylation site" description="N-linked (GlcNAc...) asparagine" evidence="2">
    <location>
        <position position="136"/>
    </location>
</feature>
<feature type="glycosylation site" description="N-linked (GlcNAc...) asparagine" evidence="2">
    <location>
        <position position="200"/>
    </location>
</feature>
<feature type="glycosylation site" description="N-linked (GlcNAc...) asparagine" evidence="2">
    <location>
        <position position="231"/>
    </location>
</feature>
<feature type="glycosylation site" description="N-linked (GlcNAc...) asparagine" evidence="2">
    <location>
        <position position="264"/>
    </location>
</feature>
<feature type="glycosylation site" description="N-linked (GlcNAc...) asparagine" evidence="2">
    <location>
        <position position="286"/>
    </location>
</feature>
<feature type="glycosylation site" description="N-linked (GlcNAc...) asparagine" evidence="2">
    <location>
        <position position="301"/>
    </location>
</feature>
<feature type="glycosylation site" description="N-linked (GlcNAc...) asparagine" evidence="2">
    <location>
        <position position="491"/>
    </location>
</feature>
<comment type="function">
    <text evidence="4">Acid phosphatase activity with p-nitrophenyl phosphate (pNPP), D-myoinositol 1-phosphate (Ins(1)P1), phytic acid and Myo-inositol hexakisphosphate. Low or no activity with Glc-6-P and ATP. Confers shoot growth stimulation, enhanced salt and osmotic stress tolerance, and ABA insensitivity. May modulate ascorbic acid (AsA) levels by controlling the input of myoinositol into this branch of AsA biosynthesis.</text>
</comment>
<comment type="catalytic activity">
    <reaction>
        <text>1D-myo-inositol hexakisphosphate + H2O = 1D-myo-inositol 1,2,3,5,6-pentakisphosphate + phosphate</text>
        <dbReference type="Rhea" id="RHEA:20960"/>
        <dbReference type="ChEBI" id="CHEBI:15377"/>
        <dbReference type="ChEBI" id="CHEBI:43474"/>
        <dbReference type="ChEBI" id="CHEBI:58130"/>
        <dbReference type="ChEBI" id="CHEBI:58747"/>
    </reaction>
</comment>
<comment type="catalytic activity">
    <reaction>
        <text>a phosphate monoester + H2O = an alcohol + phosphate</text>
        <dbReference type="Rhea" id="RHEA:15017"/>
        <dbReference type="ChEBI" id="CHEBI:15377"/>
        <dbReference type="ChEBI" id="CHEBI:30879"/>
        <dbReference type="ChEBI" id="CHEBI:43474"/>
        <dbReference type="ChEBI" id="CHEBI:67140"/>
        <dbReference type="EC" id="3.1.3.2"/>
    </reaction>
</comment>
<comment type="cofactor">
    <cofactor evidence="1">
        <name>Fe cation</name>
        <dbReference type="ChEBI" id="CHEBI:24875"/>
    </cofactor>
    <text evidence="1">Binds 1 Fe cation per subunit.</text>
</comment>
<comment type="cofactor">
    <cofactor evidence="1">
        <name>Zn(2+)</name>
        <dbReference type="ChEBI" id="CHEBI:29105"/>
    </cofactor>
    <text evidence="1">Binds 1 zinc ion per subunit.</text>
</comment>
<comment type="biophysicochemical properties">
    <phDependence>
        <text evidence="4">Optimum pH is 4.5.</text>
    </phDependence>
</comment>
<comment type="subunit">
    <text evidence="1">Homodimer.</text>
</comment>
<comment type="subcellular location">
    <subcellularLocation>
        <location evidence="1">Secreted</location>
    </subcellularLocation>
</comment>
<comment type="tissue specificity">
    <text evidence="3 4">Expressed in roots, stems, cotyledons, leaves, flowers and siliques.</text>
</comment>
<comment type="similarity">
    <text evidence="5">Belongs to the metallophosphoesterase superfamily. Purple acid phosphatase family.</text>
</comment>
<accession>Q9SFU3</accession>
<dbReference type="EC" id="3.1.3.-"/>
<dbReference type="EC" id="3.1.3.2"/>
<dbReference type="EMBL" id="AF448726">
    <property type="protein sequence ID" value="AAN74650.1"/>
    <property type="molecule type" value="mRNA"/>
</dbReference>
<dbReference type="EMBL" id="AC012395">
    <property type="protein sequence ID" value="AAF20233.1"/>
    <property type="molecule type" value="Genomic_DNA"/>
</dbReference>
<dbReference type="EMBL" id="CP002686">
    <property type="protein sequence ID" value="AEE74502.1"/>
    <property type="molecule type" value="Genomic_DNA"/>
</dbReference>
<dbReference type="RefSeq" id="NP_187369.1">
    <property type="nucleotide sequence ID" value="NM_111593.3"/>
</dbReference>
<dbReference type="SMR" id="Q9SFU3"/>
<dbReference type="FunCoup" id="Q9SFU3">
    <property type="interactions" value="98"/>
</dbReference>
<dbReference type="STRING" id="3702.Q9SFU3"/>
<dbReference type="GlyCosmos" id="Q9SFU3">
    <property type="glycosylation" value="7 sites, No reported glycans"/>
</dbReference>
<dbReference type="GlyGen" id="Q9SFU3">
    <property type="glycosylation" value="7 sites"/>
</dbReference>
<dbReference type="PaxDb" id="3702-AT3G07130.1"/>
<dbReference type="ProteomicsDB" id="249015"/>
<dbReference type="EnsemblPlants" id="AT3G07130.1">
    <property type="protein sequence ID" value="AT3G07130.1"/>
    <property type="gene ID" value="AT3G07130"/>
</dbReference>
<dbReference type="GeneID" id="819899"/>
<dbReference type="Gramene" id="AT3G07130.1">
    <property type="protein sequence ID" value="AT3G07130.1"/>
    <property type="gene ID" value="AT3G07130"/>
</dbReference>
<dbReference type="KEGG" id="ath:AT3G07130"/>
<dbReference type="Araport" id="AT3G07130"/>
<dbReference type="TAIR" id="AT3G07130">
    <property type="gene designation" value="PAP15"/>
</dbReference>
<dbReference type="eggNOG" id="KOG1378">
    <property type="taxonomic scope" value="Eukaryota"/>
</dbReference>
<dbReference type="HOGENOM" id="CLU_013387_1_0_1"/>
<dbReference type="InParanoid" id="Q9SFU3"/>
<dbReference type="OMA" id="WGRFMQN"/>
<dbReference type="PhylomeDB" id="Q9SFU3"/>
<dbReference type="BRENDA" id="3.1.3.2">
    <property type="organism ID" value="399"/>
</dbReference>
<dbReference type="PRO" id="PR:Q9SFU3"/>
<dbReference type="Proteomes" id="UP000006548">
    <property type="component" value="Chromosome 3"/>
</dbReference>
<dbReference type="ExpressionAtlas" id="Q9SFU3">
    <property type="expression patterns" value="baseline and differential"/>
</dbReference>
<dbReference type="GO" id="GO:0005576">
    <property type="term" value="C:extracellular region"/>
    <property type="evidence" value="ECO:0007669"/>
    <property type="project" value="UniProtKB-SubCell"/>
</dbReference>
<dbReference type="GO" id="GO:0008707">
    <property type="term" value="F:4-phytase activity"/>
    <property type="evidence" value="ECO:0007669"/>
    <property type="project" value="RHEA"/>
</dbReference>
<dbReference type="GO" id="GO:0003993">
    <property type="term" value="F:acid phosphatase activity"/>
    <property type="evidence" value="ECO:0000314"/>
    <property type="project" value="TAIR"/>
</dbReference>
<dbReference type="GO" id="GO:0046872">
    <property type="term" value="F:metal ion binding"/>
    <property type="evidence" value="ECO:0007669"/>
    <property type="project" value="UniProtKB-KW"/>
</dbReference>
<dbReference type="GO" id="GO:0009846">
    <property type="term" value="P:pollen germination"/>
    <property type="evidence" value="ECO:0000315"/>
    <property type="project" value="TAIR"/>
</dbReference>
<dbReference type="GO" id="GO:0009845">
    <property type="term" value="P:seed germination"/>
    <property type="evidence" value="ECO:0000315"/>
    <property type="project" value="TAIR"/>
</dbReference>
<dbReference type="CDD" id="cd00839">
    <property type="entry name" value="MPP_PAPs"/>
    <property type="match status" value="1"/>
</dbReference>
<dbReference type="FunFam" id="2.60.40.380:FF:000004">
    <property type="entry name" value="Purple acid phosphatase"/>
    <property type="match status" value="1"/>
</dbReference>
<dbReference type="FunFam" id="3.60.21.10:FF:000128">
    <property type="entry name" value="Purple acid phosphatase"/>
    <property type="match status" value="1"/>
</dbReference>
<dbReference type="Gene3D" id="3.60.21.10">
    <property type="match status" value="2"/>
</dbReference>
<dbReference type="Gene3D" id="2.60.40.380">
    <property type="entry name" value="Purple acid phosphatase-like, N-terminal"/>
    <property type="match status" value="1"/>
</dbReference>
<dbReference type="InterPro" id="IPR004843">
    <property type="entry name" value="Calcineurin-like_PHP_ApaH"/>
</dbReference>
<dbReference type="InterPro" id="IPR029052">
    <property type="entry name" value="Metallo-depent_PP-like"/>
</dbReference>
<dbReference type="InterPro" id="IPR041792">
    <property type="entry name" value="MPP_PAP"/>
</dbReference>
<dbReference type="InterPro" id="IPR039331">
    <property type="entry name" value="PPA-like"/>
</dbReference>
<dbReference type="InterPro" id="IPR008963">
    <property type="entry name" value="Purple_acid_Pase-like_N"/>
</dbReference>
<dbReference type="InterPro" id="IPR015914">
    <property type="entry name" value="Purple_acid_Pase_N"/>
</dbReference>
<dbReference type="InterPro" id="IPR025733">
    <property type="entry name" value="Purple_acid_PPase_C_dom"/>
</dbReference>
<dbReference type="PANTHER" id="PTHR22953">
    <property type="entry name" value="ACID PHOSPHATASE RELATED"/>
    <property type="match status" value="1"/>
</dbReference>
<dbReference type="PANTHER" id="PTHR22953:SF96">
    <property type="entry name" value="PURPLE ACID PHOSPHATASE 15"/>
    <property type="match status" value="1"/>
</dbReference>
<dbReference type="Pfam" id="PF00149">
    <property type="entry name" value="Metallophos"/>
    <property type="match status" value="1"/>
</dbReference>
<dbReference type="Pfam" id="PF14008">
    <property type="entry name" value="Metallophos_C"/>
    <property type="match status" value="1"/>
</dbReference>
<dbReference type="Pfam" id="PF16656">
    <property type="entry name" value="Pur_ac_phosph_N"/>
    <property type="match status" value="1"/>
</dbReference>
<dbReference type="SUPFAM" id="SSF56300">
    <property type="entry name" value="Metallo-dependent phosphatases"/>
    <property type="match status" value="1"/>
</dbReference>
<dbReference type="SUPFAM" id="SSF49363">
    <property type="entry name" value="Purple acid phosphatase, N-terminal domain"/>
    <property type="match status" value="1"/>
</dbReference>